<feature type="chain" id="PRO_0000245414" description="Uncharacterized protein YJL047C-A">
    <location>
        <begin position="1"/>
        <end position="44"/>
    </location>
</feature>
<accession>Q3E737</accession>
<accession>D6VWD6</accession>
<name>YJ047_YEAST</name>
<gene>
    <name type="ordered locus">YJL047C-A</name>
</gene>
<dbReference type="EMBL" id="Z49323">
    <property type="status" value="NOT_ANNOTATED_CDS"/>
    <property type="molecule type" value="Genomic_DNA"/>
</dbReference>
<dbReference type="EMBL" id="BK006943">
    <property type="protein sequence ID" value="DAA08752.1"/>
    <property type="molecule type" value="Genomic_DNA"/>
</dbReference>
<dbReference type="RefSeq" id="NP_878105.1">
    <property type="nucleotide sequence ID" value="NM_001184635.1"/>
</dbReference>
<dbReference type="SMR" id="Q3E737"/>
<dbReference type="BioGRID" id="37010">
    <property type="interactions" value="29"/>
</dbReference>
<dbReference type="FunCoup" id="Q3E737">
    <property type="interactions" value="23"/>
</dbReference>
<dbReference type="STRING" id="4932.YJL047C-A"/>
<dbReference type="PaxDb" id="4932-YJL047C-A"/>
<dbReference type="EnsemblFungi" id="YJL047C-A_mRNA">
    <property type="protein sequence ID" value="YJL047C-A"/>
    <property type="gene ID" value="YJL047C-A"/>
</dbReference>
<dbReference type="GeneID" id="1466468"/>
<dbReference type="KEGG" id="sce:YJL047C-A"/>
<dbReference type="AGR" id="SGD:S000028804"/>
<dbReference type="SGD" id="S000028804">
    <property type="gene designation" value="YJL047C-A"/>
</dbReference>
<dbReference type="VEuPathDB" id="FungiDB:YJL047C-A"/>
<dbReference type="HOGENOM" id="CLU_3224924_0_0_1"/>
<dbReference type="InParanoid" id="Q3E737"/>
<dbReference type="BioCyc" id="YEAST:G3O-31809-MONOMER"/>
<dbReference type="BioGRID-ORCS" id="1466468">
    <property type="hits" value="1 hit in 10 CRISPR screens"/>
</dbReference>
<dbReference type="PRO" id="PR:Q3E737"/>
<dbReference type="Proteomes" id="UP000002311">
    <property type="component" value="Chromosome X"/>
</dbReference>
<protein>
    <recommendedName>
        <fullName>Uncharacterized protein YJL047C-A</fullName>
    </recommendedName>
</protein>
<proteinExistence type="predicted"/>
<organism>
    <name type="scientific">Saccharomyces cerevisiae (strain ATCC 204508 / S288c)</name>
    <name type="common">Baker's yeast</name>
    <dbReference type="NCBI Taxonomy" id="559292"/>
    <lineage>
        <taxon>Eukaryota</taxon>
        <taxon>Fungi</taxon>
        <taxon>Dikarya</taxon>
        <taxon>Ascomycota</taxon>
        <taxon>Saccharomycotina</taxon>
        <taxon>Saccharomycetes</taxon>
        <taxon>Saccharomycetales</taxon>
        <taxon>Saccharomycetaceae</taxon>
        <taxon>Saccharomyces</taxon>
    </lineage>
</organism>
<sequence length="44" mass="5049">MKIKISIEISLSLLSEHYKRNENCISNMLVIGEGPRGETIVERF</sequence>
<keyword id="KW-1185">Reference proteome</keyword>
<reference key="1">
    <citation type="journal article" date="1996" name="EMBO J.">
        <title>Complete nucleotide sequence of Saccharomyces cerevisiae chromosome X.</title>
        <authorList>
            <person name="Galibert F."/>
            <person name="Alexandraki D."/>
            <person name="Baur A."/>
            <person name="Boles E."/>
            <person name="Chalwatzis N."/>
            <person name="Chuat J.-C."/>
            <person name="Coster F."/>
            <person name="Cziepluch C."/>
            <person name="de Haan M."/>
            <person name="Domdey H."/>
            <person name="Durand P."/>
            <person name="Entian K.-D."/>
            <person name="Gatius M."/>
            <person name="Goffeau A."/>
            <person name="Grivell L.A."/>
            <person name="Hennemann A."/>
            <person name="Herbert C.J."/>
            <person name="Heumann K."/>
            <person name="Hilger F."/>
            <person name="Hollenberg C.P."/>
            <person name="Huang M.-E."/>
            <person name="Jacq C."/>
            <person name="Jauniaux J.-C."/>
            <person name="Katsoulou C."/>
            <person name="Kirchrath L."/>
            <person name="Kleine K."/>
            <person name="Kordes E."/>
            <person name="Koetter P."/>
            <person name="Liebl S."/>
            <person name="Louis E.J."/>
            <person name="Manus V."/>
            <person name="Mewes H.-W."/>
            <person name="Miosga T."/>
            <person name="Obermaier B."/>
            <person name="Perea J."/>
            <person name="Pohl T.M."/>
            <person name="Portetelle D."/>
            <person name="Pujol A."/>
            <person name="Purnelle B."/>
            <person name="Ramezani Rad M."/>
            <person name="Rasmussen S.W."/>
            <person name="Rose M."/>
            <person name="Rossau R."/>
            <person name="Schaaff-Gerstenschlaeger I."/>
            <person name="Smits P.H.M."/>
            <person name="Scarcez T."/>
            <person name="Soriano N."/>
            <person name="To Van D."/>
            <person name="Tzermia M."/>
            <person name="Van Broekhoven A."/>
            <person name="Vandenbol M."/>
            <person name="Wedler H."/>
            <person name="von Wettstein D."/>
            <person name="Wambutt R."/>
            <person name="Zagulski M."/>
            <person name="Zollner A."/>
            <person name="Karpfinger-Hartl L."/>
        </authorList>
    </citation>
    <scope>NUCLEOTIDE SEQUENCE [LARGE SCALE GENOMIC DNA]</scope>
    <source>
        <strain>ATCC 204508 / S288c</strain>
    </source>
</reference>
<reference key="2">
    <citation type="journal article" date="2014" name="G3 (Bethesda)">
        <title>The reference genome sequence of Saccharomyces cerevisiae: Then and now.</title>
        <authorList>
            <person name="Engel S.R."/>
            <person name="Dietrich F.S."/>
            <person name="Fisk D.G."/>
            <person name="Binkley G."/>
            <person name="Balakrishnan R."/>
            <person name="Costanzo M.C."/>
            <person name="Dwight S.S."/>
            <person name="Hitz B.C."/>
            <person name="Karra K."/>
            <person name="Nash R.S."/>
            <person name="Weng S."/>
            <person name="Wong E.D."/>
            <person name="Lloyd P."/>
            <person name="Skrzypek M.S."/>
            <person name="Miyasato S.R."/>
            <person name="Simison M."/>
            <person name="Cherry J.M."/>
        </authorList>
    </citation>
    <scope>GENOME REANNOTATION</scope>
    <source>
        <strain>ATCC 204508 / S288c</strain>
    </source>
</reference>